<proteinExistence type="inferred from homology"/>
<name>RBL_PROLU</name>
<geneLocation type="chloroplast"/>
<organism>
    <name type="scientific">Proboscidea louisianica</name>
    <name type="common">Louisiana Devil's-claw</name>
    <name type="synonym">Martynia louisianica</name>
    <dbReference type="NCBI Taxonomy" id="9786"/>
    <lineage>
        <taxon>Eukaryota</taxon>
        <taxon>Viridiplantae</taxon>
        <taxon>Streptophyta</taxon>
        <taxon>Embryophyta</taxon>
        <taxon>Tracheophyta</taxon>
        <taxon>Spermatophyta</taxon>
        <taxon>Magnoliopsida</taxon>
        <taxon>eudicotyledons</taxon>
        <taxon>Gunneridae</taxon>
        <taxon>Pentapetalae</taxon>
        <taxon>asterids</taxon>
        <taxon>lamiids</taxon>
        <taxon>Lamiales</taxon>
        <taxon>Martyniaceae</taxon>
        <taxon>Proboscidea</taxon>
    </lineage>
</organism>
<feature type="chain" id="PRO_0000062575" description="Ribulose bisphosphate carboxylase large chain">
    <location>
        <begin position="1" status="less than"/>
        <end position="466"/>
    </location>
</feature>
<feature type="active site" description="Proton acceptor" evidence="1">
    <location>
        <position position="165"/>
    </location>
</feature>
<feature type="active site" description="Proton acceptor" evidence="1">
    <location>
        <position position="284"/>
    </location>
</feature>
<feature type="binding site" description="in homodimeric partner" evidence="1">
    <location>
        <position position="113"/>
    </location>
    <ligand>
        <name>substrate</name>
    </ligand>
</feature>
<feature type="binding site" evidence="1">
    <location>
        <position position="163"/>
    </location>
    <ligand>
        <name>substrate</name>
    </ligand>
</feature>
<feature type="binding site" evidence="1">
    <location>
        <position position="167"/>
    </location>
    <ligand>
        <name>substrate</name>
    </ligand>
</feature>
<feature type="binding site" description="via carbamate group" evidence="1">
    <location>
        <position position="191"/>
    </location>
    <ligand>
        <name>Mg(2+)</name>
        <dbReference type="ChEBI" id="CHEBI:18420"/>
    </ligand>
</feature>
<feature type="binding site" evidence="1">
    <location>
        <position position="193"/>
    </location>
    <ligand>
        <name>Mg(2+)</name>
        <dbReference type="ChEBI" id="CHEBI:18420"/>
    </ligand>
</feature>
<feature type="binding site" evidence="1">
    <location>
        <position position="194"/>
    </location>
    <ligand>
        <name>Mg(2+)</name>
        <dbReference type="ChEBI" id="CHEBI:18420"/>
    </ligand>
</feature>
<feature type="binding site" evidence="1">
    <location>
        <position position="285"/>
    </location>
    <ligand>
        <name>substrate</name>
    </ligand>
</feature>
<feature type="binding site" evidence="1">
    <location>
        <position position="317"/>
    </location>
    <ligand>
        <name>substrate</name>
    </ligand>
</feature>
<feature type="binding site" evidence="1">
    <location>
        <position position="369"/>
    </location>
    <ligand>
        <name>substrate</name>
    </ligand>
</feature>
<feature type="site" description="Transition state stabilizer" evidence="1">
    <location>
        <position position="324"/>
    </location>
</feature>
<feature type="modified residue" description="N6,N6,N6-trimethyllysine" evidence="1">
    <location>
        <position position="4"/>
    </location>
</feature>
<feature type="modified residue" description="N6-carboxylysine" evidence="1">
    <location>
        <position position="191"/>
    </location>
</feature>
<feature type="disulfide bond" description="Interchain; in linked form" evidence="1">
    <location>
        <position position="237"/>
    </location>
</feature>
<feature type="non-terminal residue">
    <location>
        <position position="1"/>
    </location>
</feature>
<evidence type="ECO:0000255" key="1">
    <source>
        <dbReference type="HAMAP-Rule" id="MF_01338"/>
    </source>
</evidence>
<accession>P28444</accession>
<gene>
    <name evidence="1" type="primary">rbcL</name>
</gene>
<keyword id="KW-0113">Calvin cycle</keyword>
<keyword id="KW-0120">Carbon dioxide fixation</keyword>
<keyword id="KW-0150">Chloroplast</keyword>
<keyword id="KW-1015">Disulfide bond</keyword>
<keyword id="KW-0456">Lyase</keyword>
<keyword id="KW-0460">Magnesium</keyword>
<keyword id="KW-0479">Metal-binding</keyword>
<keyword id="KW-0488">Methylation</keyword>
<keyword id="KW-0503">Monooxygenase</keyword>
<keyword id="KW-0560">Oxidoreductase</keyword>
<keyword id="KW-0601">Photorespiration</keyword>
<keyword id="KW-0602">Photosynthesis</keyword>
<keyword id="KW-0934">Plastid</keyword>
<comment type="function">
    <text evidence="1">RuBisCO catalyzes two reactions: the carboxylation of D-ribulose 1,5-bisphosphate, the primary event in carbon dioxide fixation, as well as the oxidative fragmentation of the pentose substrate in the photorespiration process. Both reactions occur simultaneously and in competition at the same active site.</text>
</comment>
<comment type="catalytic activity">
    <reaction evidence="1">
        <text>2 (2R)-3-phosphoglycerate + 2 H(+) = D-ribulose 1,5-bisphosphate + CO2 + H2O</text>
        <dbReference type="Rhea" id="RHEA:23124"/>
        <dbReference type="ChEBI" id="CHEBI:15377"/>
        <dbReference type="ChEBI" id="CHEBI:15378"/>
        <dbReference type="ChEBI" id="CHEBI:16526"/>
        <dbReference type="ChEBI" id="CHEBI:57870"/>
        <dbReference type="ChEBI" id="CHEBI:58272"/>
        <dbReference type="EC" id="4.1.1.39"/>
    </reaction>
</comment>
<comment type="catalytic activity">
    <reaction evidence="1">
        <text>D-ribulose 1,5-bisphosphate + O2 = 2-phosphoglycolate + (2R)-3-phosphoglycerate + 2 H(+)</text>
        <dbReference type="Rhea" id="RHEA:36631"/>
        <dbReference type="ChEBI" id="CHEBI:15378"/>
        <dbReference type="ChEBI" id="CHEBI:15379"/>
        <dbReference type="ChEBI" id="CHEBI:57870"/>
        <dbReference type="ChEBI" id="CHEBI:58033"/>
        <dbReference type="ChEBI" id="CHEBI:58272"/>
    </reaction>
</comment>
<comment type="cofactor">
    <cofactor evidence="1">
        <name>Mg(2+)</name>
        <dbReference type="ChEBI" id="CHEBI:18420"/>
    </cofactor>
    <text evidence="1">Binds 1 Mg(2+) ion per subunit.</text>
</comment>
<comment type="subunit">
    <text evidence="1">Heterohexadecamer of 8 large chains and 8 small chains; disulfide-linked. The disulfide link is formed within the large subunit homodimers.</text>
</comment>
<comment type="subcellular location">
    <subcellularLocation>
        <location>Plastid</location>
        <location>Chloroplast</location>
    </subcellularLocation>
</comment>
<comment type="PTM">
    <text evidence="1">The disulfide bond which can form in the large chain dimeric partners within the hexadecamer appears to be associated with oxidative stress and protein turnover.</text>
</comment>
<comment type="miscellaneous">
    <text evidence="1">The basic functional RuBisCO is composed of a large chain homodimer in a 'head-to-tail' conformation. In form I RuBisCO this homodimer is arranged in a barrel-like tetramer with the small subunits forming a tetrameric 'cap' on each end of the 'barrel'.</text>
</comment>
<comment type="similarity">
    <text evidence="1">Belongs to the RuBisCO large chain family. Type I subfamily.</text>
</comment>
<sequence length="466" mass="51671">VGFKAGVKEYKLTYYTPEYETKDTDILAAFRVTPQPGVPPEEAGAAVAAESSTGTWTTVWTDGLTSLDRYKGRCYHIEPVPGETDQYICYVAYPLDLFEEGSVTNMFTSIVGNVFGFKALRALRLEDLRIPTAYIKTFQGPPHGIQVERDKLNKYGRPLLGCTIKPKLGLSAKNYGRAVYECLRGGLDFTKDDENVNSQPFMRWRDRFLFCAEALYKAQAETGEIKGHYLNATAGTCEEMMKRAVFARELGVPIIMHDYLTGGFTANTSLAHYCRDNGLLLHIHRAMHAVIDRQKNHGIHFRVLAKALRMSGGDHIHSGTVVGKLEGERDITLGFVDLLRDDFIEKDRSRGIYFTQDWVSLPGVIPVASGGIHVWHMPALTEIFGDDSVLQFGGGTLGHPWGNAPGAVANRVALEACVQARNEGRDLAAEGNAIIREASKWSPELAAACEVWKEIKFEFKAVDTLD</sequence>
<protein>
    <recommendedName>
        <fullName evidence="1">Ribulose bisphosphate carboxylase large chain</fullName>
        <shortName evidence="1">RuBisCO large subunit</shortName>
        <ecNumber evidence="1">4.1.1.39</ecNumber>
    </recommendedName>
</protein>
<reference key="1">
    <citation type="journal article" date="1992" name="Science">
        <title>Carnivorous plants: phylogeny and structural evolution.</title>
        <authorList>
            <person name="Albert V.A."/>
            <person name="Williams S.E."/>
            <person name="Chase M.W."/>
        </authorList>
    </citation>
    <scope>NUCLEOTIDE SEQUENCE [GENOMIC DNA]</scope>
</reference>
<dbReference type="EC" id="4.1.1.39" evidence="1"/>
<dbReference type="EMBL" id="L01946">
    <property type="protein sequence ID" value="AAA84538.2"/>
    <property type="molecule type" value="Genomic_DNA"/>
</dbReference>
<dbReference type="SMR" id="P28444"/>
<dbReference type="GO" id="GO:0009507">
    <property type="term" value="C:chloroplast"/>
    <property type="evidence" value="ECO:0007669"/>
    <property type="project" value="UniProtKB-SubCell"/>
</dbReference>
<dbReference type="GO" id="GO:0000287">
    <property type="term" value="F:magnesium ion binding"/>
    <property type="evidence" value="ECO:0007669"/>
    <property type="project" value="InterPro"/>
</dbReference>
<dbReference type="GO" id="GO:0004497">
    <property type="term" value="F:monooxygenase activity"/>
    <property type="evidence" value="ECO:0007669"/>
    <property type="project" value="UniProtKB-KW"/>
</dbReference>
<dbReference type="GO" id="GO:0016984">
    <property type="term" value="F:ribulose-bisphosphate carboxylase activity"/>
    <property type="evidence" value="ECO:0007669"/>
    <property type="project" value="UniProtKB-EC"/>
</dbReference>
<dbReference type="GO" id="GO:0009853">
    <property type="term" value="P:photorespiration"/>
    <property type="evidence" value="ECO:0007669"/>
    <property type="project" value="UniProtKB-KW"/>
</dbReference>
<dbReference type="GO" id="GO:0019253">
    <property type="term" value="P:reductive pentose-phosphate cycle"/>
    <property type="evidence" value="ECO:0007669"/>
    <property type="project" value="UniProtKB-KW"/>
</dbReference>
<dbReference type="CDD" id="cd08212">
    <property type="entry name" value="RuBisCO_large_I"/>
    <property type="match status" value="1"/>
</dbReference>
<dbReference type="FunFam" id="3.20.20.110:FF:000001">
    <property type="entry name" value="Ribulose bisphosphate carboxylase large chain"/>
    <property type="match status" value="1"/>
</dbReference>
<dbReference type="FunFam" id="3.30.70.150:FF:000001">
    <property type="entry name" value="Ribulose bisphosphate carboxylase large chain"/>
    <property type="match status" value="1"/>
</dbReference>
<dbReference type="Gene3D" id="3.20.20.110">
    <property type="entry name" value="Ribulose bisphosphate carboxylase, large subunit, C-terminal domain"/>
    <property type="match status" value="1"/>
</dbReference>
<dbReference type="Gene3D" id="3.30.70.150">
    <property type="entry name" value="RuBisCO large subunit, N-terminal domain"/>
    <property type="match status" value="1"/>
</dbReference>
<dbReference type="HAMAP" id="MF_01338">
    <property type="entry name" value="RuBisCO_L_type1"/>
    <property type="match status" value="1"/>
</dbReference>
<dbReference type="InterPro" id="IPR033966">
    <property type="entry name" value="RuBisCO"/>
</dbReference>
<dbReference type="InterPro" id="IPR020878">
    <property type="entry name" value="RuBisCo_large_chain_AS"/>
</dbReference>
<dbReference type="InterPro" id="IPR000685">
    <property type="entry name" value="RuBisCO_lsu_C"/>
</dbReference>
<dbReference type="InterPro" id="IPR036376">
    <property type="entry name" value="RuBisCO_lsu_C_sf"/>
</dbReference>
<dbReference type="InterPro" id="IPR017443">
    <property type="entry name" value="RuBisCO_lsu_fd_N"/>
</dbReference>
<dbReference type="InterPro" id="IPR036422">
    <property type="entry name" value="RuBisCO_lsu_N_sf"/>
</dbReference>
<dbReference type="InterPro" id="IPR020888">
    <property type="entry name" value="RuBisCO_lsuI"/>
</dbReference>
<dbReference type="NCBIfam" id="NF003252">
    <property type="entry name" value="PRK04208.1"/>
    <property type="match status" value="1"/>
</dbReference>
<dbReference type="PANTHER" id="PTHR42704">
    <property type="entry name" value="RIBULOSE BISPHOSPHATE CARBOXYLASE"/>
    <property type="match status" value="1"/>
</dbReference>
<dbReference type="PANTHER" id="PTHR42704:SF15">
    <property type="entry name" value="RIBULOSE BISPHOSPHATE CARBOXYLASE LARGE CHAIN"/>
    <property type="match status" value="1"/>
</dbReference>
<dbReference type="Pfam" id="PF00016">
    <property type="entry name" value="RuBisCO_large"/>
    <property type="match status" value="1"/>
</dbReference>
<dbReference type="Pfam" id="PF02788">
    <property type="entry name" value="RuBisCO_large_N"/>
    <property type="match status" value="1"/>
</dbReference>
<dbReference type="SFLD" id="SFLDG01052">
    <property type="entry name" value="RuBisCO"/>
    <property type="match status" value="1"/>
</dbReference>
<dbReference type="SFLD" id="SFLDS00014">
    <property type="entry name" value="RuBisCO"/>
    <property type="match status" value="1"/>
</dbReference>
<dbReference type="SFLD" id="SFLDG00301">
    <property type="entry name" value="RuBisCO-like_proteins"/>
    <property type="match status" value="1"/>
</dbReference>
<dbReference type="SUPFAM" id="SSF51649">
    <property type="entry name" value="RuBisCo, C-terminal domain"/>
    <property type="match status" value="1"/>
</dbReference>
<dbReference type="SUPFAM" id="SSF54966">
    <property type="entry name" value="RuBisCO, large subunit, small (N-terminal) domain"/>
    <property type="match status" value="1"/>
</dbReference>
<dbReference type="PROSITE" id="PS00157">
    <property type="entry name" value="RUBISCO_LARGE"/>
    <property type="match status" value="1"/>
</dbReference>